<keyword id="KW-0012">Acyltransferase</keyword>
<keyword id="KW-0028">Amino-acid biosynthesis</keyword>
<keyword id="KW-0963">Cytoplasm</keyword>
<keyword id="KW-0220">Diaminopimelate biosynthesis</keyword>
<keyword id="KW-0457">Lysine biosynthesis</keyword>
<keyword id="KW-0677">Repeat</keyword>
<keyword id="KW-0808">Transferase</keyword>
<proteinExistence type="inferred from homology"/>
<reference key="1">
    <citation type="submission" date="2006-09" db="EMBL/GenBank/DDBJ databases">
        <title>Complete sequence of Rhodopseudomonas palustris BisA53.</title>
        <authorList>
            <consortium name="US DOE Joint Genome Institute"/>
            <person name="Copeland A."/>
            <person name="Lucas S."/>
            <person name="Lapidus A."/>
            <person name="Barry K."/>
            <person name="Detter J.C."/>
            <person name="Glavina del Rio T."/>
            <person name="Hammon N."/>
            <person name="Israni S."/>
            <person name="Dalin E."/>
            <person name="Tice H."/>
            <person name="Pitluck S."/>
            <person name="Chain P."/>
            <person name="Malfatti S."/>
            <person name="Shin M."/>
            <person name="Vergez L."/>
            <person name="Schmutz J."/>
            <person name="Larimer F."/>
            <person name="Land M."/>
            <person name="Hauser L."/>
            <person name="Pelletier D.A."/>
            <person name="Kyrpides N."/>
            <person name="Kim E."/>
            <person name="Harwood C.S."/>
            <person name="Oda Y."/>
            <person name="Richardson P."/>
        </authorList>
    </citation>
    <scope>NUCLEOTIDE SEQUENCE [LARGE SCALE GENOMIC DNA]</scope>
    <source>
        <strain>BisA53</strain>
    </source>
</reference>
<comment type="catalytic activity">
    <reaction evidence="1">
        <text>(S)-2,3,4,5-tetrahydrodipicolinate + succinyl-CoA + H2O = (S)-2-succinylamino-6-oxoheptanedioate + CoA</text>
        <dbReference type="Rhea" id="RHEA:17325"/>
        <dbReference type="ChEBI" id="CHEBI:15377"/>
        <dbReference type="ChEBI" id="CHEBI:15685"/>
        <dbReference type="ChEBI" id="CHEBI:16845"/>
        <dbReference type="ChEBI" id="CHEBI:57287"/>
        <dbReference type="ChEBI" id="CHEBI:57292"/>
        <dbReference type="EC" id="2.3.1.117"/>
    </reaction>
</comment>
<comment type="pathway">
    <text evidence="1">Amino-acid biosynthesis; L-lysine biosynthesis via DAP pathway; LL-2,6-diaminopimelate from (S)-tetrahydrodipicolinate (succinylase route): step 1/3.</text>
</comment>
<comment type="subunit">
    <text evidence="1">Homotrimer.</text>
</comment>
<comment type="subcellular location">
    <subcellularLocation>
        <location evidence="1">Cytoplasm</location>
    </subcellularLocation>
</comment>
<comment type="similarity">
    <text evidence="1">Belongs to the transferase hexapeptide repeat family.</text>
</comment>
<name>DAPD_RHOP5</name>
<gene>
    <name evidence="1" type="primary">dapD</name>
    <name type="ordered locus">RPE_0651</name>
</gene>
<dbReference type="EC" id="2.3.1.117" evidence="1"/>
<dbReference type="EMBL" id="CP000463">
    <property type="protein sequence ID" value="ABJ04609.1"/>
    <property type="molecule type" value="Genomic_DNA"/>
</dbReference>
<dbReference type="SMR" id="Q07TX5"/>
<dbReference type="STRING" id="316055.RPE_0651"/>
<dbReference type="KEGG" id="rpe:RPE_0651"/>
<dbReference type="eggNOG" id="COG2171">
    <property type="taxonomic scope" value="Bacteria"/>
</dbReference>
<dbReference type="HOGENOM" id="CLU_050859_0_1_5"/>
<dbReference type="OrthoDB" id="9775362at2"/>
<dbReference type="UniPathway" id="UPA00034">
    <property type="reaction ID" value="UER00019"/>
</dbReference>
<dbReference type="GO" id="GO:0005737">
    <property type="term" value="C:cytoplasm"/>
    <property type="evidence" value="ECO:0007669"/>
    <property type="project" value="UniProtKB-SubCell"/>
</dbReference>
<dbReference type="GO" id="GO:0008666">
    <property type="term" value="F:2,3,4,5-tetrahydropyridine-2,6-dicarboxylate N-succinyltransferase activity"/>
    <property type="evidence" value="ECO:0007669"/>
    <property type="project" value="UniProtKB-UniRule"/>
</dbReference>
<dbReference type="GO" id="GO:0019877">
    <property type="term" value="P:diaminopimelate biosynthetic process"/>
    <property type="evidence" value="ECO:0007669"/>
    <property type="project" value="UniProtKB-UniRule"/>
</dbReference>
<dbReference type="GO" id="GO:0009089">
    <property type="term" value="P:lysine biosynthetic process via diaminopimelate"/>
    <property type="evidence" value="ECO:0007669"/>
    <property type="project" value="UniProtKB-UniRule"/>
</dbReference>
<dbReference type="CDD" id="cd03350">
    <property type="entry name" value="LbH_THP_succinylT"/>
    <property type="match status" value="1"/>
</dbReference>
<dbReference type="Gene3D" id="2.160.10.10">
    <property type="entry name" value="Hexapeptide repeat proteins"/>
    <property type="match status" value="1"/>
</dbReference>
<dbReference type="Gene3D" id="1.10.166.10">
    <property type="entry name" value="Tetrahydrodipicolinate-N-succinyltransferase, N-terminal domain"/>
    <property type="match status" value="1"/>
</dbReference>
<dbReference type="HAMAP" id="MF_00811">
    <property type="entry name" value="DapD"/>
    <property type="match status" value="1"/>
</dbReference>
<dbReference type="InterPro" id="IPR005664">
    <property type="entry name" value="DapD_Trfase_Hexpep_rpt_fam"/>
</dbReference>
<dbReference type="InterPro" id="IPR001451">
    <property type="entry name" value="Hexapep"/>
</dbReference>
<dbReference type="InterPro" id="IPR023180">
    <property type="entry name" value="THP_succinylTrfase_dom1"/>
</dbReference>
<dbReference type="InterPro" id="IPR037133">
    <property type="entry name" value="THP_succinylTrfase_N_sf"/>
</dbReference>
<dbReference type="InterPro" id="IPR050179">
    <property type="entry name" value="Trans_hexapeptide_repeat"/>
</dbReference>
<dbReference type="InterPro" id="IPR011004">
    <property type="entry name" value="Trimer_LpxA-like_sf"/>
</dbReference>
<dbReference type="NCBIfam" id="TIGR00965">
    <property type="entry name" value="dapD"/>
    <property type="match status" value="1"/>
</dbReference>
<dbReference type="NCBIfam" id="NF008808">
    <property type="entry name" value="PRK11830.1"/>
    <property type="match status" value="1"/>
</dbReference>
<dbReference type="PANTHER" id="PTHR43300:SF10">
    <property type="entry name" value="2,3,4,5-TETRAHYDROPYRIDINE-2,6-DICARBOXYLATE N-ACETYLTRANSFERASE"/>
    <property type="match status" value="1"/>
</dbReference>
<dbReference type="PANTHER" id="PTHR43300">
    <property type="entry name" value="ACETYLTRANSFERASE"/>
    <property type="match status" value="1"/>
</dbReference>
<dbReference type="Pfam" id="PF14602">
    <property type="entry name" value="Hexapep_2"/>
    <property type="match status" value="1"/>
</dbReference>
<dbReference type="Pfam" id="PF14805">
    <property type="entry name" value="THDPS_N_2"/>
    <property type="match status" value="1"/>
</dbReference>
<dbReference type="SUPFAM" id="SSF51161">
    <property type="entry name" value="Trimeric LpxA-like enzymes"/>
    <property type="match status" value="1"/>
</dbReference>
<sequence length="281" mass="29730">MPLSALESTINAAFDARDTVSAATKGEVRDAVEQALDLLDKGEVRVAAREASGAWVVNQWLKKAVLLSFRLNDMTTISGGPGGASWWDKVPSKFYGWGENRFRDAGFRAVPGAIVRRSAFIGKNVVLMPSFVNLGAYVDEATMVDTWSTVGSCAQIGKRVHISGGVGIGGVLEPLQAGPVIIEDDCFIGARAEVAEGVIVRRGAVLAMGVFLGASTKIVDRTTGEIFIGEVPEYSVVVPGALPGKPMANGEPGPATACAVIVKRVDERTRSKTSINELLRD</sequence>
<accession>Q07TX5</accession>
<feature type="chain" id="PRO_1000047170" description="2,3,4,5-tetrahydropyridine-2,6-dicarboxylate N-succinyltransferase">
    <location>
        <begin position="1"/>
        <end position="281"/>
    </location>
</feature>
<feature type="binding site" evidence="1">
    <location>
        <position position="108"/>
    </location>
    <ligand>
        <name>substrate</name>
    </ligand>
</feature>
<feature type="binding site" evidence="1">
    <location>
        <position position="145"/>
    </location>
    <ligand>
        <name>substrate</name>
    </ligand>
</feature>
<protein>
    <recommendedName>
        <fullName evidence="1">2,3,4,5-tetrahydropyridine-2,6-dicarboxylate N-succinyltransferase</fullName>
        <ecNumber evidence="1">2.3.1.117</ecNumber>
    </recommendedName>
    <alternativeName>
        <fullName evidence="1">Tetrahydrodipicolinate N-succinyltransferase</fullName>
        <shortName evidence="1">THDP succinyltransferase</shortName>
        <shortName evidence="1">THP succinyltransferase</shortName>
        <shortName evidence="1">Tetrahydropicolinate succinylase</shortName>
    </alternativeName>
</protein>
<organism>
    <name type="scientific">Rhodopseudomonas palustris (strain BisA53)</name>
    <dbReference type="NCBI Taxonomy" id="316055"/>
    <lineage>
        <taxon>Bacteria</taxon>
        <taxon>Pseudomonadati</taxon>
        <taxon>Pseudomonadota</taxon>
        <taxon>Alphaproteobacteria</taxon>
        <taxon>Hyphomicrobiales</taxon>
        <taxon>Nitrobacteraceae</taxon>
        <taxon>Rhodopseudomonas</taxon>
    </lineage>
</organism>
<evidence type="ECO:0000255" key="1">
    <source>
        <dbReference type="HAMAP-Rule" id="MF_00811"/>
    </source>
</evidence>